<protein>
    <recommendedName>
        <fullName evidence="1">Cardiolipin synthase A</fullName>
        <shortName evidence="1">CL synthase</shortName>
        <ecNumber evidence="1">2.7.8.-</ecNumber>
    </recommendedName>
</protein>
<feature type="chain" id="PRO_0000201264" description="Cardiolipin synthase A">
    <location>
        <begin position="1"/>
        <end position="486"/>
    </location>
</feature>
<feature type="transmembrane region" description="Helical" evidence="1">
    <location>
        <begin position="3"/>
        <end position="23"/>
    </location>
</feature>
<feature type="transmembrane region" description="Helical" evidence="1">
    <location>
        <begin position="38"/>
        <end position="58"/>
    </location>
</feature>
<feature type="domain" description="PLD phosphodiesterase 1" evidence="1">
    <location>
        <begin position="219"/>
        <end position="246"/>
    </location>
</feature>
<feature type="domain" description="PLD phosphodiesterase 2" evidence="1">
    <location>
        <begin position="399"/>
        <end position="426"/>
    </location>
</feature>
<feature type="active site" evidence="1">
    <location>
        <position position="224"/>
    </location>
</feature>
<feature type="active site" evidence="1">
    <location>
        <position position="226"/>
    </location>
</feature>
<feature type="active site" evidence="1">
    <location>
        <position position="231"/>
    </location>
</feature>
<feature type="active site" evidence="1">
    <location>
        <position position="404"/>
    </location>
</feature>
<feature type="active site" evidence="1">
    <location>
        <position position="406"/>
    </location>
</feature>
<feature type="active site" evidence="1">
    <location>
        <position position="411"/>
    </location>
</feature>
<evidence type="ECO:0000255" key="1">
    <source>
        <dbReference type="HAMAP-Rule" id="MF_00190"/>
    </source>
</evidence>
<keyword id="KW-0997">Cell inner membrane</keyword>
<keyword id="KW-1003">Cell membrane</keyword>
<keyword id="KW-0444">Lipid biosynthesis</keyword>
<keyword id="KW-0443">Lipid metabolism</keyword>
<keyword id="KW-0472">Membrane</keyword>
<keyword id="KW-0594">Phospholipid biosynthesis</keyword>
<keyword id="KW-1208">Phospholipid metabolism</keyword>
<keyword id="KW-1185">Reference proteome</keyword>
<keyword id="KW-0677">Repeat</keyword>
<keyword id="KW-0808">Transferase</keyword>
<keyword id="KW-0812">Transmembrane</keyword>
<keyword id="KW-1133">Transmembrane helix</keyword>
<organism>
    <name type="scientific">Salmonella typhimurium (strain LT2 / SGSC1412 / ATCC 700720)</name>
    <dbReference type="NCBI Taxonomy" id="99287"/>
    <lineage>
        <taxon>Bacteria</taxon>
        <taxon>Pseudomonadati</taxon>
        <taxon>Pseudomonadota</taxon>
        <taxon>Gammaproteobacteria</taxon>
        <taxon>Enterobacterales</taxon>
        <taxon>Enterobacteriaceae</taxon>
        <taxon>Salmonella</taxon>
    </lineage>
</organism>
<accession>P63798</accession>
<accession>Q8XH03</accession>
<proteinExistence type="inferred from homology"/>
<gene>
    <name evidence="1" type="primary">clsA</name>
    <name type="synonym">cls</name>
    <name type="ordered locus">STM1739</name>
</gene>
<comment type="function">
    <text evidence="1">Catalyzes the reversible phosphatidyl group transfer from one phosphatidylglycerol molecule to another to form cardiolipin (CL) (diphosphatidylglycerol) and glycerol.</text>
</comment>
<comment type="catalytic activity">
    <reaction evidence="1">
        <text>2 a 1,2-diacyl-sn-glycero-3-phospho-(1'-sn-glycerol) = a cardiolipin + glycerol</text>
        <dbReference type="Rhea" id="RHEA:31451"/>
        <dbReference type="ChEBI" id="CHEBI:17754"/>
        <dbReference type="ChEBI" id="CHEBI:62237"/>
        <dbReference type="ChEBI" id="CHEBI:64716"/>
    </reaction>
</comment>
<comment type="subcellular location">
    <subcellularLocation>
        <location evidence="1">Cell inner membrane</location>
        <topology evidence="1">Multi-pass membrane protein</topology>
    </subcellularLocation>
</comment>
<comment type="similarity">
    <text evidence="1">Belongs to the phospholipase D family. Cardiolipin synthase subfamily. ClsA sub-subfamily.</text>
</comment>
<reference key="1">
    <citation type="journal article" date="2001" name="Nature">
        <title>Complete genome sequence of Salmonella enterica serovar Typhimurium LT2.</title>
        <authorList>
            <person name="McClelland M."/>
            <person name="Sanderson K.E."/>
            <person name="Spieth J."/>
            <person name="Clifton S.W."/>
            <person name="Latreille P."/>
            <person name="Courtney L."/>
            <person name="Porwollik S."/>
            <person name="Ali J."/>
            <person name="Dante M."/>
            <person name="Du F."/>
            <person name="Hou S."/>
            <person name="Layman D."/>
            <person name="Leonard S."/>
            <person name="Nguyen C."/>
            <person name="Scott K."/>
            <person name="Holmes A."/>
            <person name="Grewal N."/>
            <person name="Mulvaney E."/>
            <person name="Ryan E."/>
            <person name="Sun H."/>
            <person name="Florea L."/>
            <person name="Miller W."/>
            <person name="Stoneking T."/>
            <person name="Nhan M."/>
            <person name="Waterston R."/>
            <person name="Wilson R.K."/>
        </authorList>
    </citation>
    <scope>NUCLEOTIDE SEQUENCE [LARGE SCALE GENOMIC DNA]</scope>
    <source>
        <strain>LT2 / SGSC1412 / ATCC 700720</strain>
    </source>
</reference>
<name>CLSA_SALTY</name>
<sequence>MTTFYTVVSWLVILGYWVLIAGVTLRILMKRRAVPSAMAWLLIIYILPLVGIIAYLSVGELHLGKRRAERARAMWPSTAKWLNDLKACKHIFAQENSSVASSLFKLCERRQGIAGVKGNQLQLLTDSDDVMQALIRDIQLARHNIEMVFYIWQPGGMADQVAESLMAAARRGIHCRLMLDSAGSVAFFRSPWAAMMRNAGIEVVEALKVNLMRVFLRRMDLRQHRKMVMIDNYIAYTGSMNMVDPRFFKQDAGVGQWVDLMARMEGPVATAMGIVYSCDWEIETGKRILPPPPDVNIMPFEQASGHTIHTIASGPGFPEDLIHQALLTATYAAREYLIMTTPYFVPSDDLLHAICTAAQRGVDVSIILPRKNDSLLVGWASRAFFSELLAAGVKIYQFEGGLLHTKSVLVDGELSLVGTVNLDMRSLWLNFEITLVIDDTGFGADLAAVQDDYISRSRLLDARLWVKRPLWQRITERLFYFFSPLL</sequence>
<dbReference type="EC" id="2.7.8.-" evidence="1"/>
<dbReference type="EMBL" id="AE006468">
    <property type="protein sequence ID" value="AAL20657.1"/>
    <property type="molecule type" value="Genomic_DNA"/>
</dbReference>
<dbReference type="RefSeq" id="NP_460698.1">
    <property type="nucleotide sequence ID" value="NC_003197.2"/>
</dbReference>
<dbReference type="RefSeq" id="WP_000206886.1">
    <property type="nucleotide sequence ID" value="NC_003197.2"/>
</dbReference>
<dbReference type="SMR" id="P63798"/>
<dbReference type="STRING" id="99287.STM1739"/>
<dbReference type="PaxDb" id="99287-STM1739"/>
<dbReference type="GeneID" id="1253258"/>
<dbReference type="KEGG" id="stm:STM1739"/>
<dbReference type="PATRIC" id="fig|99287.12.peg.1836"/>
<dbReference type="HOGENOM" id="CLU_038053_1_0_6"/>
<dbReference type="OMA" id="WLNFEVT"/>
<dbReference type="PhylomeDB" id="P63798"/>
<dbReference type="BioCyc" id="SENT99287:STM1739-MONOMER"/>
<dbReference type="PHI-base" id="PHI:123208"/>
<dbReference type="Proteomes" id="UP000001014">
    <property type="component" value="Chromosome"/>
</dbReference>
<dbReference type="GO" id="GO:0016020">
    <property type="term" value="C:membrane"/>
    <property type="evidence" value="ECO:0000318"/>
    <property type="project" value="GO_Central"/>
</dbReference>
<dbReference type="GO" id="GO:0005886">
    <property type="term" value="C:plasma membrane"/>
    <property type="evidence" value="ECO:0007669"/>
    <property type="project" value="UniProtKB-SubCell"/>
</dbReference>
<dbReference type="GO" id="GO:0008808">
    <property type="term" value="F:cardiolipin synthase activity"/>
    <property type="evidence" value="ECO:0000318"/>
    <property type="project" value="GO_Central"/>
</dbReference>
<dbReference type="GO" id="GO:0032049">
    <property type="term" value="P:cardiolipin biosynthetic process"/>
    <property type="evidence" value="ECO:0000318"/>
    <property type="project" value="GO_Central"/>
</dbReference>
<dbReference type="CDD" id="cd09152">
    <property type="entry name" value="PLDc_EcCLS_like_1"/>
    <property type="match status" value="1"/>
</dbReference>
<dbReference type="CDD" id="cd09158">
    <property type="entry name" value="PLDc_EcCLS_like_2"/>
    <property type="match status" value="1"/>
</dbReference>
<dbReference type="FunFam" id="3.30.870.10:FF:000002">
    <property type="entry name" value="Cardiolipin synthase A"/>
    <property type="match status" value="1"/>
</dbReference>
<dbReference type="FunFam" id="3.30.870.10:FF:000003">
    <property type="entry name" value="Cardiolipin synthase A"/>
    <property type="match status" value="1"/>
</dbReference>
<dbReference type="Gene3D" id="3.30.870.10">
    <property type="entry name" value="Endonuclease Chain A"/>
    <property type="match status" value="2"/>
</dbReference>
<dbReference type="HAMAP" id="MF_00190">
    <property type="entry name" value="Cardiolipin_synth_ClsA"/>
    <property type="match status" value="1"/>
</dbReference>
<dbReference type="InterPro" id="IPR022924">
    <property type="entry name" value="Cardiolipin_synthase"/>
</dbReference>
<dbReference type="InterPro" id="IPR030840">
    <property type="entry name" value="CL_synthase_A"/>
</dbReference>
<dbReference type="InterPro" id="IPR027379">
    <property type="entry name" value="CLS_N"/>
</dbReference>
<dbReference type="InterPro" id="IPR025202">
    <property type="entry name" value="PLD-like_dom"/>
</dbReference>
<dbReference type="InterPro" id="IPR001736">
    <property type="entry name" value="PLipase_D/transphosphatidylase"/>
</dbReference>
<dbReference type="NCBIfam" id="TIGR04265">
    <property type="entry name" value="bac_cardiolipin"/>
    <property type="match status" value="1"/>
</dbReference>
<dbReference type="PANTHER" id="PTHR21248">
    <property type="entry name" value="CARDIOLIPIN SYNTHASE"/>
    <property type="match status" value="1"/>
</dbReference>
<dbReference type="PANTHER" id="PTHR21248:SF22">
    <property type="entry name" value="PHOSPHOLIPASE D"/>
    <property type="match status" value="1"/>
</dbReference>
<dbReference type="Pfam" id="PF13091">
    <property type="entry name" value="PLDc_2"/>
    <property type="match status" value="2"/>
</dbReference>
<dbReference type="Pfam" id="PF13396">
    <property type="entry name" value="PLDc_N"/>
    <property type="match status" value="1"/>
</dbReference>
<dbReference type="SMART" id="SM00155">
    <property type="entry name" value="PLDc"/>
    <property type="match status" value="2"/>
</dbReference>
<dbReference type="SUPFAM" id="SSF56024">
    <property type="entry name" value="Phospholipase D/nuclease"/>
    <property type="match status" value="2"/>
</dbReference>
<dbReference type="PROSITE" id="PS50035">
    <property type="entry name" value="PLD"/>
    <property type="match status" value="2"/>
</dbReference>